<reference key="1">
    <citation type="journal article" date="2009" name="PLoS ONE">
        <title>Genome sequence of the endosymbiont Rickettsia peacockii and comparison with virulent Rickettsia rickettsii: identification of virulence factors.</title>
        <authorList>
            <person name="Felsheim R.F."/>
            <person name="Kurtti T.J."/>
            <person name="Munderloh U.G."/>
        </authorList>
    </citation>
    <scope>NUCLEOTIDE SEQUENCE [LARGE SCALE GENOMIC DNA]</scope>
    <source>
        <strain>Rustic</strain>
    </source>
</reference>
<protein>
    <recommendedName>
        <fullName evidence="1">Acyl-[acyl-carrier-protein]--UDP-N-acetylglucosamine O-acyltransferase</fullName>
        <shortName evidence="1">UDP-N-acetylglucosamine acyltransferase</shortName>
        <ecNumber evidence="1">2.3.1.129</ecNumber>
    </recommendedName>
</protein>
<keyword id="KW-0012">Acyltransferase</keyword>
<keyword id="KW-0963">Cytoplasm</keyword>
<keyword id="KW-0441">Lipid A biosynthesis</keyword>
<keyword id="KW-0444">Lipid biosynthesis</keyword>
<keyword id="KW-0443">Lipid metabolism</keyword>
<keyword id="KW-0677">Repeat</keyword>
<keyword id="KW-0808">Transferase</keyword>
<feature type="chain" id="PRO_1000205799" description="Acyl-[acyl-carrier-protein]--UDP-N-acetylglucosamine O-acyltransferase">
    <location>
        <begin position="1"/>
        <end position="264"/>
    </location>
</feature>
<comment type="function">
    <text evidence="1">Involved in the biosynthesis of lipid A, a phosphorylated glycolipid that anchors the lipopolysaccharide to the outer membrane of the cell.</text>
</comment>
<comment type="catalytic activity">
    <reaction evidence="1">
        <text>a (3R)-hydroxyacyl-[ACP] + UDP-N-acetyl-alpha-D-glucosamine = a UDP-3-O-[(3R)-3-hydroxyacyl]-N-acetyl-alpha-D-glucosamine + holo-[ACP]</text>
        <dbReference type="Rhea" id="RHEA:67812"/>
        <dbReference type="Rhea" id="RHEA-COMP:9685"/>
        <dbReference type="Rhea" id="RHEA-COMP:9945"/>
        <dbReference type="ChEBI" id="CHEBI:57705"/>
        <dbReference type="ChEBI" id="CHEBI:64479"/>
        <dbReference type="ChEBI" id="CHEBI:78827"/>
        <dbReference type="ChEBI" id="CHEBI:173225"/>
        <dbReference type="EC" id="2.3.1.129"/>
    </reaction>
</comment>
<comment type="pathway">
    <text evidence="1">Glycolipid biosynthesis; lipid IV(A) biosynthesis; lipid IV(A) from (3R)-3-hydroxytetradecanoyl-[acyl-carrier-protein] and UDP-N-acetyl-alpha-D-glucosamine: step 1/6.</text>
</comment>
<comment type="subunit">
    <text evidence="1">Homotrimer.</text>
</comment>
<comment type="subcellular location">
    <subcellularLocation>
        <location evidence="1">Cytoplasm</location>
    </subcellularLocation>
</comment>
<comment type="similarity">
    <text evidence="1">Belongs to the transferase hexapeptide repeat family. LpxA subfamily.</text>
</comment>
<organism>
    <name type="scientific">Rickettsia peacockii (strain Rustic)</name>
    <dbReference type="NCBI Taxonomy" id="562019"/>
    <lineage>
        <taxon>Bacteria</taxon>
        <taxon>Pseudomonadati</taxon>
        <taxon>Pseudomonadota</taxon>
        <taxon>Alphaproteobacteria</taxon>
        <taxon>Rickettsiales</taxon>
        <taxon>Rickettsiaceae</taxon>
        <taxon>Rickettsieae</taxon>
        <taxon>Rickettsia</taxon>
        <taxon>spotted fever group</taxon>
    </lineage>
</organism>
<proteinExistence type="inferred from homology"/>
<name>LPXA_RICPU</name>
<sequence>MSNSNIHTTAVIAEGTKLGNNVKIGPYCIIGPKVVLHDNVELKSHVVIEGITEIGENTVIYPFASIGQPPQILKYANERSSTIIGSNNTIREYVTVQAGSQGGGMMTRVGNNNLFMVGVHIGHDCKIGNNVVFANYVSLAGHIGVGDYAIIGGLSAVHQYARIGEYSMIGGLSPVGADVIPFGLVSSKRAVLEGLNLIGMNRKGFDKVKSLSALKAIEEIFSGEGNFAERIKQVAEKYNNNSIVIQIIDFLNQDSSRAFCRFEK</sequence>
<dbReference type="EC" id="2.3.1.129" evidence="1"/>
<dbReference type="EMBL" id="CP001227">
    <property type="protein sequence ID" value="ACR47024.1"/>
    <property type="molecule type" value="Genomic_DNA"/>
</dbReference>
<dbReference type="RefSeq" id="WP_012736336.1">
    <property type="nucleotide sequence ID" value="NC_012730.1"/>
</dbReference>
<dbReference type="SMR" id="C4K0C1"/>
<dbReference type="KEGG" id="rpk:RPR_00035"/>
<dbReference type="HOGENOM" id="CLU_061249_0_0_5"/>
<dbReference type="UniPathway" id="UPA00359">
    <property type="reaction ID" value="UER00477"/>
</dbReference>
<dbReference type="Proteomes" id="UP000005015">
    <property type="component" value="Chromosome"/>
</dbReference>
<dbReference type="GO" id="GO:0005737">
    <property type="term" value="C:cytoplasm"/>
    <property type="evidence" value="ECO:0007669"/>
    <property type="project" value="UniProtKB-SubCell"/>
</dbReference>
<dbReference type="GO" id="GO:0016020">
    <property type="term" value="C:membrane"/>
    <property type="evidence" value="ECO:0007669"/>
    <property type="project" value="GOC"/>
</dbReference>
<dbReference type="GO" id="GO:0008780">
    <property type="term" value="F:acyl-[acyl-carrier-protein]-UDP-N-acetylglucosamine O-acyltransferase activity"/>
    <property type="evidence" value="ECO:0007669"/>
    <property type="project" value="UniProtKB-UniRule"/>
</dbReference>
<dbReference type="GO" id="GO:0009245">
    <property type="term" value="P:lipid A biosynthetic process"/>
    <property type="evidence" value="ECO:0007669"/>
    <property type="project" value="UniProtKB-UniRule"/>
</dbReference>
<dbReference type="CDD" id="cd03351">
    <property type="entry name" value="LbH_UDP-GlcNAc_AT"/>
    <property type="match status" value="1"/>
</dbReference>
<dbReference type="Gene3D" id="2.160.10.10">
    <property type="entry name" value="Hexapeptide repeat proteins"/>
    <property type="match status" value="1"/>
</dbReference>
<dbReference type="Gene3D" id="1.20.1180.10">
    <property type="entry name" value="Udp N-acetylglucosamine O-acyltransferase, C-terminal domain"/>
    <property type="match status" value="1"/>
</dbReference>
<dbReference type="HAMAP" id="MF_00387">
    <property type="entry name" value="LpxA"/>
    <property type="match status" value="1"/>
</dbReference>
<dbReference type="InterPro" id="IPR029098">
    <property type="entry name" value="Acetyltransf_C"/>
</dbReference>
<dbReference type="InterPro" id="IPR037157">
    <property type="entry name" value="Acetyltransf_C_sf"/>
</dbReference>
<dbReference type="InterPro" id="IPR001451">
    <property type="entry name" value="Hexapep"/>
</dbReference>
<dbReference type="InterPro" id="IPR018357">
    <property type="entry name" value="Hexapep_transf_CS"/>
</dbReference>
<dbReference type="InterPro" id="IPR010137">
    <property type="entry name" value="Lipid_A_LpxA"/>
</dbReference>
<dbReference type="InterPro" id="IPR011004">
    <property type="entry name" value="Trimer_LpxA-like_sf"/>
</dbReference>
<dbReference type="NCBIfam" id="TIGR01852">
    <property type="entry name" value="lipid_A_lpxA"/>
    <property type="match status" value="1"/>
</dbReference>
<dbReference type="NCBIfam" id="NF003657">
    <property type="entry name" value="PRK05289.1"/>
    <property type="match status" value="1"/>
</dbReference>
<dbReference type="PANTHER" id="PTHR43480">
    <property type="entry name" value="ACYL-[ACYL-CARRIER-PROTEIN]--UDP-N-ACETYLGLUCOSAMINE O-ACYLTRANSFERASE"/>
    <property type="match status" value="1"/>
</dbReference>
<dbReference type="PANTHER" id="PTHR43480:SF1">
    <property type="entry name" value="ACYL-[ACYL-CARRIER-PROTEIN]--UDP-N-ACETYLGLUCOSAMINE O-ACYLTRANSFERASE, MITOCHONDRIAL-RELATED"/>
    <property type="match status" value="1"/>
</dbReference>
<dbReference type="Pfam" id="PF13720">
    <property type="entry name" value="Acetyltransf_11"/>
    <property type="match status" value="1"/>
</dbReference>
<dbReference type="Pfam" id="PF00132">
    <property type="entry name" value="Hexapep"/>
    <property type="match status" value="2"/>
</dbReference>
<dbReference type="PIRSF" id="PIRSF000456">
    <property type="entry name" value="UDP-GlcNAc_acltr"/>
    <property type="match status" value="1"/>
</dbReference>
<dbReference type="SUPFAM" id="SSF51161">
    <property type="entry name" value="Trimeric LpxA-like enzymes"/>
    <property type="match status" value="1"/>
</dbReference>
<dbReference type="PROSITE" id="PS00101">
    <property type="entry name" value="HEXAPEP_TRANSFERASES"/>
    <property type="match status" value="1"/>
</dbReference>
<evidence type="ECO:0000255" key="1">
    <source>
        <dbReference type="HAMAP-Rule" id="MF_00387"/>
    </source>
</evidence>
<accession>C4K0C1</accession>
<gene>
    <name evidence="1" type="primary">lpxA</name>
    <name type="ordered locus">RPR_00035</name>
</gene>